<evidence type="ECO:0000250" key="1">
    <source>
        <dbReference type="UniProtKB" id="Q9U9Q4"/>
    </source>
</evidence>
<evidence type="ECO:0000255" key="2">
    <source>
        <dbReference type="HAMAP-Rule" id="MF_03007"/>
    </source>
</evidence>
<evidence type="ECO:0000255" key="3">
    <source>
        <dbReference type="PROSITE-ProRule" id="PRU01182"/>
    </source>
</evidence>
<accession>B3MP94</accession>
<reference key="1">
    <citation type="journal article" date="2007" name="Nature">
        <title>Evolution of genes and genomes on the Drosophila phylogeny.</title>
        <authorList>
            <consortium name="Drosophila 12 genomes consortium"/>
        </authorList>
    </citation>
    <scope>NUCLEOTIDE SEQUENCE [LARGE SCALE GENOMIC DNA]</scope>
    <source>
        <strain>Tucson 14024-0371.13</strain>
    </source>
</reference>
<name>EIF3H_DROAN</name>
<dbReference type="EMBL" id="CH902620">
    <property type="protein sequence ID" value="EDV32213.1"/>
    <property type="molecule type" value="Genomic_DNA"/>
</dbReference>
<dbReference type="SMR" id="B3MP94"/>
<dbReference type="FunCoup" id="B3MP94">
    <property type="interactions" value="2286"/>
</dbReference>
<dbReference type="STRING" id="7217.B3MP94"/>
<dbReference type="MEROPS" id="M67.971"/>
<dbReference type="EnsemblMetazoa" id="FBtr0118858">
    <property type="protein sequence ID" value="FBpp0117350"/>
    <property type="gene ID" value="FBgn0091185"/>
</dbReference>
<dbReference type="EnsemblMetazoa" id="XM_001962956.4">
    <property type="protein sequence ID" value="XP_001962992.1"/>
    <property type="gene ID" value="LOC6496986"/>
</dbReference>
<dbReference type="GeneID" id="6496986"/>
<dbReference type="KEGG" id="dan:6496986"/>
<dbReference type="CTD" id="8667"/>
<dbReference type="eggNOG" id="KOG1560">
    <property type="taxonomic scope" value="Eukaryota"/>
</dbReference>
<dbReference type="HOGENOM" id="CLU_044094_0_0_1"/>
<dbReference type="InParanoid" id="B3MP94"/>
<dbReference type="OMA" id="WYQSTYF"/>
<dbReference type="OrthoDB" id="10265695at2759"/>
<dbReference type="PhylomeDB" id="B3MP94"/>
<dbReference type="ChiTaRS" id="eIF-3p40">
    <property type="organism name" value="fly"/>
</dbReference>
<dbReference type="Proteomes" id="UP000007801">
    <property type="component" value="Unassembled WGS sequence"/>
</dbReference>
<dbReference type="GO" id="GO:0016282">
    <property type="term" value="C:eukaryotic 43S preinitiation complex"/>
    <property type="evidence" value="ECO:0007669"/>
    <property type="project" value="UniProtKB-UniRule"/>
</dbReference>
<dbReference type="GO" id="GO:0033290">
    <property type="term" value="C:eukaryotic 48S preinitiation complex"/>
    <property type="evidence" value="ECO:0007669"/>
    <property type="project" value="UniProtKB-UniRule"/>
</dbReference>
<dbReference type="GO" id="GO:0005852">
    <property type="term" value="C:eukaryotic translation initiation factor 3 complex"/>
    <property type="evidence" value="ECO:0007669"/>
    <property type="project" value="UniProtKB-UniRule"/>
</dbReference>
<dbReference type="GO" id="GO:0008237">
    <property type="term" value="F:metallopeptidase activity"/>
    <property type="evidence" value="ECO:0007669"/>
    <property type="project" value="InterPro"/>
</dbReference>
<dbReference type="GO" id="GO:0003743">
    <property type="term" value="F:translation initiation factor activity"/>
    <property type="evidence" value="ECO:0007669"/>
    <property type="project" value="UniProtKB-UniRule"/>
</dbReference>
<dbReference type="GO" id="GO:0001732">
    <property type="term" value="P:formation of cytoplasmic translation initiation complex"/>
    <property type="evidence" value="ECO:0007669"/>
    <property type="project" value="UniProtKB-UniRule"/>
</dbReference>
<dbReference type="GO" id="GO:0045747">
    <property type="term" value="P:positive regulation of Notch signaling pathway"/>
    <property type="evidence" value="ECO:0007669"/>
    <property type="project" value="EnsemblMetazoa"/>
</dbReference>
<dbReference type="CDD" id="cd08065">
    <property type="entry name" value="MPN_eIF3h"/>
    <property type="match status" value="1"/>
</dbReference>
<dbReference type="FunFam" id="3.40.140.10:FF:000045">
    <property type="entry name" value="Eukaryotic translation initiation factor 3 subunit H"/>
    <property type="match status" value="1"/>
</dbReference>
<dbReference type="Gene3D" id="3.40.140.10">
    <property type="entry name" value="Cytidine Deaminase, domain 2"/>
    <property type="match status" value="1"/>
</dbReference>
<dbReference type="HAMAP" id="MF_03007">
    <property type="entry name" value="eIF3h"/>
    <property type="match status" value="1"/>
</dbReference>
<dbReference type="InterPro" id="IPR027524">
    <property type="entry name" value="eIF3h"/>
</dbReference>
<dbReference type="InterPro" id="IPR045810">
    <property type="entry name" value="eIF3h_C"/>
</dbReference>
<dbReference type="InterPro" id="IPR000555">
    <property type="entry name" value="JAMM/MPN+_dom"/>
</dbReference>
<dbReference type="InterPro" id="IPR050242">
    <property type="entry name" value="JAMM_MPN+_peptidase_M67A"/>
</dbReference>
<dbReference type="InterPro" id="IPR037518">
    <property type="entry name" value="MPN"/>
</dbReference>
<dbReference type="PANTHER" id="PTHR10410">
    <property type="entry name" value="EUKARYOTIC TRANSLATION INITIATION FACTOR 3 -RELATED"/>
    <property type="match status" value="1"/>
</dbReference>
<dbReference type="Pfam" id="PF19445">
    <property type="entry name" value="eIF3h_C"/>
    <property type="match status" value="1"/>
</dbReference>
<dbReference type="Pfam" id="PF01398">
    <property type="entry name" value="JAB"/>
    <property type="match status" value="1"/>
</dbReference>
<dbReference type="SMART" id="SM00232">
    <property type="entry name" value="JAB_MPN"/>
    <property type="match status" value="1"/>
</dbReference>
<dbReference type="PROSITE" id="PS50249">
    <property type="entry name" value="MPN"/>
    <property type="match status" value="1"/>
</dbReference>
<feature type="chain" id="PRO_0000365185" description="Eukaryotic translation initiation factor 3 subunit H">
    <location>
        <begin position="1"/>
        <end position="337"/>
    </location>
</feature>
<feature type="domain" description="MPN" evidence="3">
    <location>
        <begin position="21"/>
        <end position="153"/>
    </location>
</feature>
<gene>
    <name evidence="2" type="primary">eIF-3p40</name>
    <name evidence="2" type="synonym">eif3-S3</name>
    <name type="ORF">GF14158</name>
</gene>
<keyword id="KW-0963">Cytoplasm</keyword>
<keyword id="KW-0396">Initiation factor</keyword>
<keyword id="KW-0648">Protein biosynthesis</keyword>
<keyword id="KW-1185">Reference proteome</keyword>
<organism>
    <name type="scientific">Drosophila ananassae</name>
    <name type="common">Fruit fly</name>
    <dbReference type="NCBI Taxonomy" id="7217"/>
    <lineage>
        <taxon>Eukaryota</taxon>
        <taxon>Metazoa</taxon>
        <taxon>Ecdysozoa</taxon>
        <taxon>Arthropoda</taxon>
        <taxon>Hexapoda</taxon>
        <taxon>Insecta</taxon>
        <taxon>Pterygota</taxon>
        <taxon>Neoptera</taxon>
        <taxon>Endopterygota</taxon>
        <taxon>Diptera</taxon>
        <taxon>Brachycera</taxon>
        <taxon>Muscomorpha</taxon>
        <taxon>Ephydroidea</taxon>
        <taxon>Drosophilidae</taxon>
        <taxon>Drosophila</taxon>
        <taxon>Sophophora</taxon>
    </lineage>
</organism>
<protein>
    <recommendedName>
        <fullName evidence="2">Eukaryotic translation initiation factor 3 subunit H</fullName>
        <shortName evidence="2">eIF3h</shortName>
    </recommendedName>
    <alternativeName>
        <fullName evidence="2">Eukaryotic translation initiation factor 3 subunit 3</fullName>
    </alternativeName>
</protein>
<sequence length="337" mass="38224">MANRGGRHARNEESDNTINYVQCDGLAVMKMVKHCHEESSNMDLAQGALLGLVVDKCLEITNCFPFPKSGDETMDEEMYQLTVMRRLRRVNVDHLHVGWYQSSDVGNSLSLALLESQYHYQTSIEESVVVVYDTQKSSRGFLCLKAYRLTPQAIQMYKDGDFTPEAFRTLKVGYESLFAEIPIVIKNSPLTNIMMSELNELLPEDKGHNFLDLGTASVLENHMRSLIERVDELYQEAVRYNKYQQVVFKQDTEKHRALAKLAAENAVRTSKGEPTVPEEEVIKQFRPMPVPARLTATITSGQINTHAQHIAQFCSQSLAKLFITESLQNAKEAKETK</sequence>
<proteinExistence type="inferred from homology"/>
<comment type="function">
    <text evidence="2">Component of the eukaryotic translation initiation factor 3 (eIF-3) complex, which is involved in protein synthesis of a specialized repertoire of mRNAs and, together with other initiation factors, stimulates binding of mRNA and methionyl-tRNAi to the 40S ribosome. The eIF-3 complex specifically targets and initiates translation of a subset of mRNAs involved in cell proliferation.</text>
</comment>
<comment type="subunit">
    <text evidence="1 2">Component of the eukaryotic translation initiation factor 3 (eIF-3) complex. The eIF-3 complex interacts with pix. Interacts with mxt (By similarity).</text>
</comment>
<comment type="subcellular location">
    <subcellularLocation>
        <location evidence="2">Cytoplasm</location>
    </subcellularLocation>
</comment>
<comment type="similarity">
    <text evidence="2">Belongs to the eIF-3 subunit H family.</text>
</comment>